<dbReference type="EMBL" id="AJ243456">
    <property type="protein sequence ID" value="CAB62162.1"/>
    <property type="molecule type" value="mRNA"/>
</dbReference>
<dbReference type="EMBL" id="AC007138">
    <property type="protein sequence ID" value="AAD22646.1"/>
    <property type="molecule type" value="Genomic_DNA"/>
</dbReference>
<dbReference type="EMBL" id="AL161493">
    <property type="protein sequence ID" value="CAB80677.1"/>
    <property type="molecule type" value="Genomic_DNA"/>
</dbReference>
<dbReference type="EMBL" id="CP002687">
    <property type="protein sequence ID" value="AEE82083.1"/>
    <property type="molecule type" value="Genomic_DNA"/>
</dbReference>
<dbReference type="EMBL" id="AY084857">
    <property type="protein sequence ID" value="AAM61421.1"/>
    <property type="molecule type" value="mRNA"/>
</dbReference>
<dbReference type="PIR" id="F85023">
    <property type="entry name" value="F85023"/>
</dbReference>
<dbReference type="RefSeq" id="NP_192093.1">
    <property type="nucleotide sequence ID" value="NM_116414.4"/>
</dbReference>
<dbReference type="SMR" id="Q9S6Z8"/>
<dbReference type="BioGRID" id="13382">
    <property type="interactions" value="3"/>
</dbReference>
<dbReference type="FunCoup" id="Q9S6Z8">
    <property type="interactions" value="85"/>
</dbReference>
<dbReference type="IntAct" id="Q9S6Z8">
    <property type="interactions" value="2"/>
</dbReference>
<dbReference type="STRING" id="3702.Q9S6Z8"/>
<dbReference type="TCDB" id="1.A.1.7.5">
    <property type="family name" value="the voltage-gated ion channel (vic) superfamily"/>
</dbReference>
<dbReference type="iPTMnet" id="Q9S6Z8"/>
<dbReference type="PaxDb" id="3702-AT4G01840.1"/>
<dbReference type="ProteomicsDB" id="247144"/>
<dbReference type="EnsemblPlants" id="AT4G01840.1">
    <property type="protein sequence ID" value="AT4G01840.1"/>
    <property type="gene ID" value="AT4G01840"/>
</dbReference>
<dbReference type="GeneID" id="828091"/>
<dbReference type="Gramene" id="AT4G01840.1">
    <property type="protein sequence ID" value="AT4G01840.1"/>
    <property type="gene ID" value="AT4G01840"/>
</dbReference>
<dbReference type="KEGG" id="ath:AT4G01840"/>
<dbReference type="Araport" id="AT4G01840"/>
<dbReference type="TAIR" id="AT4G01840">
    <property type="gene designation" value="KCO5"/>
</dbReference>
<dbReference type="eggNOG" id="KOG1418">
    <property type="taxonomic scope" value="Eukaryota"/>
</dbReference>
<dbReference type="HOGENOM" id="CLU_033675_0_1_1"/>
<dbReference type="InParanoid" id="Q9S6Z8"/>
<dbReference type="OMA" id="YSGIETH"/>
<dbReference type="PhylomeDB" id="Q9S6Z8"/>
<dbReference type="PRO" id="PR:Q9S6Z8"/>
<dbReference type="Proteomes" id="UP000006548">
    <property type="component" value="Chromosome 4"/>
</dbReference>
<dbReference type="ExpressionAtlas" id="Q9S6Z8">
    <property type="expression patterns" value="baseline and differential"/>
</dbReference>
<dbReference type="GO" id="GO:0009705">
    <property type="term" value="C:plant-type vacuole membrane"/>
    <property type="evidence" value="ECO:0000314"/>
    <property type="project" value="UniProtKB"/>
</dbReference>
<dbReference type="GO" id="GO:0046872">
    <property type="term" value="F:metal ion binding"/>
    <property type="evidence" value="ECO:0007669"/>
    <property type="project" value="UniProtKB-KW"/>
</dbReference>
<dbReference type="GO" id="GO:0005267">
    <property type="term" value="F:potassium channel activity"/>
    <property type="evidence" value="ECO:0007669"/>
    <property type="project" value="UniProtKB-KW"/>
</dbReference>
<dbReference type="FunFam" id="1.10.287.70:FF:000102">
    <property type="entry name" value="Two-pore potassium channel 3"/>
    <property type="match status" value="1"/>
</dbReference>
<dbReference type="FunFam" id="1.10.287.70:FF:000165">
    <property type="entry name" value="Two-pore potassium channel 5"/>
    <property type="match status" value="1"/>
</dbReference>
<dbReference type="Gene3D" id="1.10.287.70">
    <property type="match status" value="2"/>
</dbReference>
<dbReference type="InterPro" id="IPR003280">
    <property type="entry name" value="2pore_dom_K_chnl"/>
</dbReference>
<dbReference type="InterPro" id="IPR013099">
    <property type="entry name" value="K_chnl_dom"/>
</dbReference>
<dbReference type="PANTHER" id="PTHR11003">
    <property type="entry name" value="POTASSIUM CHANNEL, SUBFAMILY K"/>
    <property type="match status" value="1"/>
</dbReference>
<dbReference type="PANTHER" id="PTHR11003:SF268">
    <property type="entry name" value="TWO-PORE POTASSIUM CHANNEL 4-RELATED"/>
    <property type="match status" value="1"/>
</dbReference>
<dbReference type="Pfam" id="PF07885">
    <property type="entry name" value="Ion_trans_2"/>
    <property type="match status" value="2"/>
</dbReference>
<dbReference type="PRINTS" id="PR01333">
    <property type="entry name" value="2POREKCHANEL"/>
</dbReference>
<dbReference type="SUPFAM" id="SSF81324">
    <property type="entry name" value="Voltage-gated potassium channels"/>
    <property type="match status" value="2"/>
</dbReference>
<proteinExistence type="evidence at protein level"/>
<sequence length="408" mass="46259">MEPLISPQPRFRLQPIPENPSSSSSSASITIPRSISNTSFFHEISQERLLLHHQDLEQSVQDDKEDQDSDSDETNRFLSQTRPLHRSRTAPAMVIIKDLRTKPPETKKPSPVSKSIIRQAIFLLIVYLTLGVSIYSFNRDHYSGIETHPVVDALYFCIVTMCTIGYGDIAPLTPWTKIFAVVFVLFGFGFLDILLSGVVNYVLDLQESMILTGIQTRQHHQHHHHHRFSAKDYIIDFEKGRMRIRMKVCLALCVVVLCIGVGALVLHFVEELGFVDSVYLSVMSVTTVGYGDRAFKTLQGRLFAAVWLLVSTLAVARAFLYLAEARIDRRHRKAVKLALNREITVDDLLKADTYQHGFISKSEYIVLKLKEMGKITQKDIDQVVIQFEKLDPNQIGKITLPDLLGDPL</sequence>
<name>KCO5_ARATH</name>
<evidence type="ECO:0000255" key="1"/>
<evidence type="ECO:0000256" key="2">
    <source>
        <dbReference type="SAM" id="MobiDB-lite"/>
    </source>
</evidence>
<evidence type="ECO:0000269" key="3">
    <source>
    </source>
</evidence>
<evidence type="ECO:0000269" key="4">
    <source>
    </source>
</evidence>
<evidence type="ECO:0000305" key="5"/>
<organism>
    <name type="scientific">Arabidopsis thaliana</name>
    <name type="common">Mouse-ear cress</name>
    <dbReference type="NCBI Taxonomy" id="3702"/>
    <lineage>
        <taxon>Eukaryota</taxon>
        <taxon>Viridiplantae</taxon>
        <taxon>Streptophyta</taxon>
        <taxon>Embryophyta</taxon>
        <taxon>Tracheophyta</taxon>
        <taxon>Spermatophyta</taxon>
        <taxon>Magnoliopsida</taxon>
        <taxon>eudicotyledons</taxon>
        <taxon>Gunneridae</taxon>
        <taxon>Pentapetalae</taxon>
        <taxon>rosids</taxon>
        <taxon>malvids</taxon>
        <taxon>Brassicales</taxon>
        <taxon>Brassicaceae</taxon>
        <taxon>Camelineae</taxon>
        <taxon>Arabidopsis</taxon>
    </lineage>
</organism>
<feature type="chain" id="PRO_0000035873" description="Two-pore potassium channel 5">
    <location>
        <begin position="1"/>
        <end position="408"/>
    </location>
</feature>
<feature type="topological domain" description="Stromal" evidence="1">
    <location>
        <begin position="22"/>
        <end position="115"/>
    </location>
</feature>
<feature type="transmembrane region" description="Helical" evidence="1">
    <location>
        <begin position="116"/>
        <end position="136"/>
    </location>
</feature>
<feature type="intramembrane region" description="Pore-forming; Name=Pore-forming 1" evidence="1">
    <location>
        <begin position="152"/>
        <end position="171"/>
    </location>
</feature>
<feature type="transmembrane region" description="Helical" evidence="1">
    <location>
        <begin position="178"/>
        <end position="198"/>
    </location>
</feature>
<feature type="topological domain" description="Stromal" evidence="1">
    <location>
        <begin position="199"/>
        <end position="248"/>
    </location>
</feature>
<feature type="transmembrane region" description="Helical" evidence="1">
    <location>
        <begin position="249"/>
        <end position="269"/>
    </location>
</feature>
<feature type="intramembrane region" description="Pore-forming; Name=Pore-forming 2" evidence="1">
    <location>
        <begin position="276"/>
        <end position="295"/>
    </location>
</feature>
<feature type="transmembrane region" description="Helical" evidence="1">
    <location>
        <begin position="302"/>
        <end position="322"/>
    </location>
</feature>
<feature type="topological domain" description="Stromal" evidence="1">
    <location>
        <begin position="323"/>
        <end position="408"/>
    </location>
</feature>
<feature type="domain" description="EF-hand 1">
    <location>
        <begin position="339"/>
        <end position="374"/>
    </location>
</feature>
<feature type="domain" description="EF-hand 2">
    <location>
        <begin position="378"/>
        <end position="408"/>
    </location>
</feature>
<feature type="region of interest" description="Disordered" evidence="2">
    <location>
        <begin position="1"/>
        <end position="29"/>
    </location>
</feature>
<feature type="region of interest" description="Disordered" evidence="2">
    <location>
        <begin position="58"/>
        <end position="82"/>
    </location>
</feature>
<feature type="compositionally biased region" description="Low complexity" evidence="2">
    <location>
        <begin position="15"/>
        <end position="29"/>
    </location>
</feature>
<feature type="compositionally biased region" description="Acidic residues" evidence="2">
    <location>
        <begin position="63"/>
        <end position="72"/>
    </location>
</feature>
<feature type="binding site" evidence="1">
    <location>
        <position position="352"/>
    </location>
    <ligand>
        <name>Ca(2+)</name>
        <dbReference type="ChEBI" id="CHEBI:29108"/>
        <label>1</label>
    </ligand>
</feature>
<feature type="binding site" evidence="1">
    <location>
        <position position="363"/>
    </location>
    <ligand>
        <name>Ca(2+)</name>
        <dbReference type="ChEBI" id="CHEBI:29108"/>
        <label>1</label>
    </ligand>
</feature>
<feature type="binding site" evidence="1">
    <location>
        <position position="391"/>
    </location>
    <ligand>
        <name>Ca(2+)</name>
        <dbReference type="ChEBI" id="CHEBI:29108"/>
        <label>2</label>
    </ligand>
</feature>
<feature type="binding site" evidence="1">
    <location>
        <position position="393"/>
    </location>
    <ligand>
        <name>Ca(2+)</name>
        <dbReference type="ChEBI" id="CHEBI:29108"/>
        <label>2</label>
    </ligand>
</feature>
<feature type="binding site" evidence="1">
    <location>
        <position position="397"/>
    </location>
    <ligand>
        <name>Ca(2+)</name>
        <dbReference type="ChEBI" id="CHEBI:29108"/>
        <label>2</label>
    </ligand>
</feature>
<feature type="binding site" evidence="1">
    <location>
        <position position="402"/>
    </location>
    <ligand>
        <name>Ca(2+)</name>
        <dbReference type="ChEBI" id="CHEBI:29108"/>
        <label>2</label>
    </ligand>
</feature>
<comment type="function">
    <text>Probable voltage-independent potassium-selective tonoplast ion channel.</text>
</comment>
<comment type="subunit">
    <text evidence="3">Homodimer.</text>
</comment>
<comment type="subcellular location">
    <subcellularLocation>
        <location evidence="3 4">Vacuole membrane</location>
        <topology evidence="3 4">Multi-pass membrane protein</topology>
    </subcellularLocation>
</comment>
<comment type="tissue specificity">
    <text evidence="3">Expressed in hydathodes and the vascular tissues of roots, stems, leaves and flowers.</text>
</comment>
<comment type="domain">
    <text>Each of the two pore-forming region (also called P-domain or P-loop) is enclosed by two transmembrane segments (2P/4TM) and contains the GYGD signature motif which seems to be involved in potassium selectivity.</text>
</comment>
<comment type="similarity">
    <text evidence="5">Belongs to the two pore domain potassium channel (TC 1.A.1.7) family.</text>
</comment>
<protein>
    <recommendedName>
        <fullName>Two-pore potassium channel 5</fullName>
        <shortName>AtTPK5</shortName>
    </recommendedName>
    <alternativeName>
        <fullName>Calcium-activated outward-rectifying potassium channel 5, chloroplastic</fullName>
        <shortName>AtKCO5</shortName>
    </alternativeName>
</protein>
<keyword id="KW-0106">Calcium</keyword>
<keyword id="KW-0407">Ion channel</keyword>
<keyword id="KW-0406">Ion transport</keyword>
<keyword id="KW-0472">Membrane</keyword>
<keyword id="KW-0479">Metal-binding</keyword>
<keyword id="KW-0630">Potassium</keyword>
<keyword id="KW-0631">Potassium channel</keyword>
<keyword id="KW-0633">Potassium transport</keyword>
<keyword id="KW-1185">Reference proteome</keyword>
<keyword id="KW-0677">Repeat</keyword>
<keyword id="KW-0812">Transmembrane</keyword>
<keyword id="KW-1133">Transmembrane helix</keyword>
<keyword id="KW-0813">Transport</keyword>
<keyword id="KW-0926">Vacuole</keyword>
<reference key="1">
    <citation type="submission" date="1999-07" db="EMBL/GenBank/DDBJ databases">
        <title>New members of the KCO family in Arabidopsis.</title>
        <authorList>
            <person name="Greven K.K."/>
            <person name="Czempinski K."/>
            <person name="Mueller-Roeber B."/>
        </authorList>
    </citation>
    <scope>NUCLEOTIDE SEQUENCE [MRNA]</scope>
    <source>
        <strain>cv. C24</strain>
    </source>
</reference>
<reference key="2">
    <citation type="journal article" date="1999" name="Nature">
        <title>Sequence and analysis of chromosome 4 of the plant Arabidopsis thaliana.</title>
        <authorList>
            <person name="Mayer K.F.X."/>
            <person name="Schueller C."/>
            <person name="Wambutt R."/>
            <person name="Murphy G."/>
            <person name="Volckaert G."/>
            <person name="Pohl T."/>
            <person name="Duesterhoeft A."/>
            <person name="Stiekema W."/>
            <person name="Entian K.-D."/>
            <person name="Terryn N."/>
            <person name="Harris B."/>
            <person name="Ansorge W."/>
            <person name="Brandt P."/>
            <person name="Grivell L.A."/>
            <person name="Rieger M."/>
            <person name="Weichselgartner M."/>
            <person name="de Simone V."/>
            <person name="Obermaier B."/>
            <person name="Mache R."/>
            <person name="Mueller M."/>
            <person name="Kreis M."/>
            <person name="Delseny M."/>
            <person name="Puigdomenech P."/>
            <person name="Watson M."/>
            <person name="Schmidtheini T."/>
            <person name="Reichert B."/>
            <person name="Portetelle D."/>
            <person name="Perez-Alonso M."/>
            <person name="Boutry M."/>
            <person name="Bancroft I."/>
            <person name="Vos P."/>
            <person name="Hoheisel J."/>
            <person name="Zimmermann W."/>
            <person name="Wedler H."/>
            <person name="Ridley P."/>
            <person name="Langham S.-A."/>
            <person name="McCullagh B."/>
            <person name="Bilham L."/>
            <person name="Robben J."/>
            <person name="van der Schueren J."/>
            <person name="Grymonprez B."/>
            <person name="Chuang Y.-J."/>
            <person name="Vandenbussche F."/>
            <person name="Braeken M."/>
            <person name="Weltjens I."/>
            <person name="Voet M."/>
            <person name="Bastiaens I."/>
            <person name="Aert R."/>
            <person name="Defoor E."/>
            <person name="Weitzenegger T."/>
            <person name="Bothe G."/>
            <person name="Ramsperger U."/>
            <person name="Hilbert H."/>
            <person name="Braun M."/>
            <person name="Holzer E."/>
            <person name="Brandt A."/>
            <person name="Peters S."/>
            <person name="van Staveren M."/>
            <person name="Dirkse W."/>
            <person name="Mooijman P."/>
            <person name="Klein Lankhorst R."/>
            <person name="Rose M."/>
            <person name="Hauf J."/>
            <person name="Koetter P."/>
            <person name="Berneiser S."/>
            <person name="Hempel S."/>
            <person name="Feldpausch M."/>
            <person name="Lamberth S."/>
            <person name="Van den Daele H."/>
            <person name="De Keyser A."/>
            <person name="Buysshaert C."/>
            <person name="Gielen J."/>
            <person name="Villarroel R."/>
            <person name="De Clercq R."/>
            <person name="van Montagu M."/>
            <person name="Rogers J."/>
            <person name="Cronin A."/>
            <person name="Quail M.A."/>
            <person name="Bray-Allen S."/>
            <person name="Clark L."/>
            <person name="Doggett J."/>
            <person name="Hall S."/>
            <person name="Kay M."/>
            <person name="Lennard N."/>
            <person name="McLay K."/>
            <person name="Mayes R."/>
            <person name="Pettett A."/>
            <person name="Rajandream M.A."/>
            <person name="Lyne M."/>
            <person name="Benes V."/>
            <person name="Rechmann S."/>
            <person name="Borkova D."/>
            <person name="Bloecker H."/>
            <person name="Scharfe M."/>
            <person name="Grimm M."/>
            <person name="Loehnert T.-H."/>
            <person name="Dose S."/>
            <person name="de Haan M."/>
            <person name="Maarse A.C."/>
            <person name="Schaefer M."/>
            <person name="Mueller-Auer S."/>
            <person name="Gabel C."/>
            <person name="Fuchs M."/>
            <person name="Fartmann B."/>
            <person name="Granderath K."/>
            <person name="Dauner D."/>
            <person name="Herzl A."/>
            <person name="Neumann S."/>
            <person name="Argiriou A."/>
            <person name="Vitale D."/>
            <person name="Liguori R."/>
            <person name="Piravandi E."/>
            <person name="Massenet O."/>
            <person name="Quigley F."/>
            <person name="Clabauld G."/>
            <person name="Muendlein A."/>
            <person name="Felber R."/>
            <person name="Schnabl S."/>
            <person name="Hiller R."/>
            <person name="Schmidt W."/>
            <person name="Lecharny A."/>
            <person name="Aubourg S."/>
            <person name="Chefdor F."/>
            <person name="Cooke R."/>
            <person name="Berger C."/>
            <person name="Monfort A."/>
            <person name="Casacuberta E."/>
            <person name="Gibbons T."/>
            <person name="Weber N."/>
            <person name="Vandenbol M."/>
            <person name="Bargues M."/>
            <person name="Terol J."/>
            <person name="Torres A."/>
            <person name="Perez-Perez A."/>
            <person name="Purnelle B."/>
            <person name="Bent E."/>
            <person name="Johnson S."/>
            <person name="Tacon D."/>
            <person name="Jesse T."/>
            <person name="Heijnen L."/>
            <person name="Schwarz S."/>
            <person name="Scholler P."/>
            <person name="Heber S."/>
            <person name="Francs P."/>
            <person name="Bielke C."/>
            <person name="Frishman D."/>
            <person name="Haase D."/>
            <person name="Lemcke K."/>
            <person name="Mewes H.-W."/>
            <person name="Stocker S."/>
            <person name="Zaccaria P."/>
            <person name="Bevan M."/>
            <person name="Wilson R.K."/>
            <person name="de la Bastide M."/>
            <person name="Habermann K."/>
            <person name="Parnell L."/>
            <person name="Dedhia N."/>
            <person name="Gnoj L."/>
            <person name="Schutz K."/>
            <person name="Huang E."/>
            <person name="Spiegel L."/>
            <person name="Sekhon M."/>
            <person name="Murray J."/>
            <person name="Sheet P."/>
            <person name="Cordes M."/>
            <person name="Abu-Threideh J."/>
            <person name="Stoneking T."/>
            <person name="Kalicki J."/>
            <person name="Graves T."/>
            <person name="Harmon G."/>
            <person name="Edwards J."/>
            <person name="Latreille P."/>
            <person name="Courtney L."/>
            <person name="Cloud J."/>
            <person name="Abbott A."/>
            <person name="Scott K."/>
            <person name="Johnson D."/>
            <person name="Minx P."/>
            <person name="Bentley D."/>
            <person name="Fulton B."/>
            <person name="Miller N."/>
            <person name="Greco T."/>
            <person name="Kemp K."/>
            <person name="Kramer J."/>
            <person name="Fulton L."/>
            <person name="Mardis E."/>
            <person name="Dante M."/>
            <person name="Pepin K."/>
            <person name="Hillier L.W."/>
            <person name="Nelson J."/>
            <person name="Spieth J."/>
            <person name="Ryan E."/>
            <person name="Andrews S."/>
            <person name="Geisel C."/>
            <person name="Layman D."/>
            <person name="Du H."/>
            <person name="Ali J."/>
            <person name="Berghoff A."/>
            <person name="Jones K."/>
            <person name="Drone K."/>
            <person name="Cotton M."/>
            <person name="Joshu C."/>
            <person name="Antonoiu B."/>
            <person name="Zidanic M."/>
            <person name="Strong C."/>
            <person name="Sun H."/>
            <person name="Lamar B."/>
            <person name="Yordan C."/>
            <person name="Ma P."/>
            <person name="Zhong J."/>
            <person name="Preston R."/>
            <person name="Vil D."/>
            <person name="Shekher M."/>
            <person name="Matero A."/>
            <person name="Shah R."/>
            <person name="Swaby I.K."/>
            <person name="O'Shaughnessy A."/>
            <person name="Rodriguez M."/>
            <person name="Hoffman J."/>
            <person name="Till S."/>
            <person name="Granat S."/>
            <person name="Shohdy N."/>
            <person name="Hasegawa A."/>
            <person name="Hameed A."/>
            <person name="Lodhi M."/>
            <person name="Johnson A."/>
            <person name="Chen E."/>
            <person name="Marra M.A."/>
            <person name="Martienssen R."/>
            <person name="McCombie W.R."/>
        </authorList>
    </citation>
    <scope>NUCLEOTIDE SEQUENCE [LARGE SCALE GENOMIC DNA]</scope>
    <source>
        <strain>cv. Columbia</strain>
    </source>
</reference>
<reference key="3">
    <citation type="journal article" date="2017" name="Plant J.">
        <title>Araport11: a complete reannotation of the Arabidopsis thaliana reference genome.</title>
        <authorList>
            <person name="Cheng C.Y."/>
            <person name="Krishnakumar V."/>
            <person name="Chan A.P."/>
            <person name="Thibaud-Nissen F."/>
            <person name="Schobel S."/>
            <person name="Town C.D."/>
        </authorList>
    </citation>
    <scope>GENOME REANNOTATION</scope>
    <source>
        <strain>cv. Columbia</strain>
    </source>
</reference>
<reference key="4">
    <citation type="submission" date="2002-03" db="EMBL/GenBank/DDBJ databases">
        <title>Full-length cDNA from Arabidopsis thaliana.</title>
        <authorList>
            <person name="Brover V.V."/>
            <person name="Troukhan M.E."/>
            <person name="Alexandrov N.A."/>
            <person name="Lu Y.-P."/>
            <person name="Flavell R.B."/>
            <person name="Feldmann K.A."/>
        </authorList>
    </citation>
    <scope>NUCLEOTIDE SEQUENCE [LARGE SCALE MRNA]</scope>
</reference>
<reference key="5">
    <citation type="journal article" date="2001" name="Plant Physiol.">
        <title>Phylogenetic relationships within cation transporter families of Arabidopsis.</title>
        <authorList>
            <person name="Maeser P."/>
            <person name="Thomine S."/>
            <person name="Schroeder J.I."/>
            <person name="Ward J.M."/>
            <person name="Hirschi K."/>
            <person name="Sze H."/>
            <person name="Talke I.N."/>
            <person name="Amtmann A."/>
            <person name="Maathuis F.J.M."/>
            <person name="Sanders D."/>
            <person name="Harper J.F."/>
            <person name="Tchieu J."/>
            <person name="Gribskov M."/>
            <person name="Persans M.W."/>
            <person name="Salt D.E."/>
            <person name="Kim S.A."/>
            <person name="Guerinot M.L."/>
        </authorList>
    </citation>
    <scope>GENE FAMILY</scope>
    <scope>NOMENCLATURE</scope>
</reference>
<reference key="6">
    <citation type="journal article" date="2004" name="Proc. Natl. Acad. Sci. U.S.A.">
        <title>AtTPK4, an Arabidopsis tandem-pore K+ channel, poised to control the pollen membrane voltage in a pH- and Ca2+-dependent manner.</title>
        <authorList>
            <person name="Becker D."/>
            <person name="Geiger D."/>
            <person name="Dunkel M."/>
            <person name="Roller A."/>
            <person name="Bertl A."/>
            <person name="Latz A."/>
            <person name="Carpaneto A."/>
            <person name="Dietrich P."/>
            <person name="Roelfsema M.R."/>
            <person name="Voelker C."/>
            <person name="Schmidt D."/>
            <person name="Mueller-Roeber B."/>
            <person name="Czempinski K."/>
            <person name="Hedrich R."/>
        </authorList>
    </citation>
    <scope>GENE FAMILY</scope>
    <scope>NOMENCLATURE</scope>
</reference>
<reference key="7">
    <citation type="journal article" date="2006" name="Plant J.">
        <title>Members of the Arabidopsis AtTPK/KCO family form homomeric vacuolar channels in planta.</title>
        <authorList>
            <person name="Voelker C."/>
            <person name="Schmidt D."/>
            <person name="Mueller-Roeber B."/>
            <person name="Czempinski K."/>
        </authorList>
    </citation>
    <scope>TISSUE SPECIFICITY</scope>
    <scope>SUBUNIT</scope>
    <scope>SUBCELLULAR LOCATION</scope>
</reference>
<reference key="8">
    <citation type="journal article" date="2007" name="Plant J.">
        <title>TPK1, a Ca(2+)-regulated Arabidopsis vacuole two-pore K(+) channel is activated by 14-3-3 proteins.</title>
        <authorList>
            <person name="Latz A."/>
            <person name="Becker D."/>
            <person name="Hekman M."/>
            <person name="Mueller T."/>
            <person name="Beyhl D."/>
            <person name="Marten I."/>
            <person name="Eing C."/>
            <person name="Fischer A."/>
            <person name="Dunkel M."/>
            <person name="Bertl A."/>
            <person name="Rapp U.R."/>
            <person name="Hedrich R."/>
        </authorList>
    </citation>
    <scope>SUBCELLULAR LOCATION</scope>
</reference>
<gene>
    <name type="primary">TPK5</name>
    <name type="synonym">KCO5</name>
    <name type="ordered locus">At4g01840</name>
    <name type="ORF">T7B11.10</name>
</gene>
<accession>Q9S6Z8</accession>